<sequence>MLFLNAKFIDLDLGENAVIVNEDDLKGTSYYPQDRVLIESHAGSVIGNIYSTKTMVQKGEVGMLVSELAEISISEGEEVKLRHAEKPESIPFIKKKMDGQVLNPHEIRTIIDEIVSKKLSNIELSAFVSSTYINGMNMDEIGEMTKRIAETGDMISWEKNLVVDIHSIGGVPGNKYALLSIPILAAAGITIPKTSSRAITSPAGTADVMEVLTNVELKEDEIKRIVKTTNGCLVWGGGVNLAPADDIIINVERPVSIDPQPQLLASVMAKKIATGIKYSVIDIPVGKGVKIKNEAEGAKLARKFIELGELLNIKVECVLTYGGQPLGRAIGPALEAKEAIEALQDPKNAPKSLIEKALSLAGILLELGGAAQIGEGQNLAWEILESGRALEKFNQIIIEQGGTPKKPEEIELGDYIEEIIAPIDGYVTDINNTGITNVVKEAGAPRDKKAGLLLNSKIGNKVKKGDVLYTIYSGSEERLVSAVNLARRVYPVKVEGMLIERISKF</sequence>
<feature type="chain" id="PRO_0000314722" description="AMP phosphorylase">
    <location>
        <begin position="1"/>
        <end position="505"/>
    </location>
</feature>
<feature type="active site" description="Proton donor" evidence="1">
    <location>
        <position position="258"/>
    </location>
</feature>
<feature type="binding site" evidence="1">
    <location>
        <position position="170"/>
    </location>
    <ligand>
        <name>AMP</name>
        <dbReference type="ChEBI" id="CHEBI:456215"/>
    </ligand>
</feature>
<feature type="binding site" evidence="1">
    <location>
        <begin position="196"/>
        <end position="201"/>
    </location>
    <ligand>
        <name>AMP</name>
        <dbReference type="ChEBI" id="CHEBI:456215"/>
    </ligand>
</feature>
<feature type="binding site" evidence="1">
    <location>
        <position position="205"/>
    </location>
    <ligand>
        <name>AMP</name>
        <dbReference type="ChEBI" id="CHEBI:456215"/>
    </ligand>
</feature>
<feature type="binding site" evidence="1">
    <location>
        <position position="266"/>
    </location>
    <ligand>
        <name>AMP</name>
        <dbReference type="ChEBI" id="CHEBI:456215"/>
    </ligand>
</feature>
<feature type="binding site" evidence="1">
    <location>
        <position position="290"/>
    </location>
    <ligand>
        <name>AMP</name>
        <dbReference type="ChEBI" id="CHEBI:456215"/>
    </ligand>
</feature>
<accession>Q6M0E4</accession>
<name>AMPPA_METMP</name>
<protein>
    <recommendedName>
        <fullName evidence="1">AMP phosphorylase</fullName>
        <shortName evidence="1">AMPpase</shortName>
        <ecNumber evidence="1">2.4.2.57</ecNumber>
    </recommendedName>
    <alternativeName>
        <fullName evidence="1">Nucleoside monophosphate phosphorylase</fullName>
        <shortName evidence="1">NMP phosphorylase</shortName>
    </alternativeName>
</protein>
<gene>
    <name type="ordered locus">MMP0327</name>
</gene>
<reference key="1">
    <citation type="journal article" date="2004" name="J. Bacteriol.">
        <title>Complete genome sequence of the genetically tractable hydrogenotrophic methanogen Methanococcus maripaludis.</title>
        <authorList>
            <person name="Hendrickson E.L."/>
            <person name="Kaul R."/>
            <person name="Zhou Y."/>
            <person name="Bovee D."/>
            <person name="Chapman P."/>
            <person name="Chung J."/>
            <person name="Conway de Macario E."/>
            <person name="Dodsworth J.A."/>
            <person name="Gillett W."/>
            <person name="Graham D.E."/>
            <person name="Hackett M."/>
            <person name="Haydock A.K."/>
            <person name="Kang A."/>
            <person name="Land M.L."/>
            <person name="Levy R."/>
            <person name="Lie T.J."/>
            <person name="Major T.A."/>
            <person name="Moore B.C."/>
            <person name="Porat I."/>
            <person name="Palmeiri A."/>
            <person name="Rouse G."/>
            <person name="Saenphimmachak C."/>
            <person name="Soell D."/>
            <person name="Van Dien S."/>
            <person name="Wang T."/>
            <person name="Whitman W.B."/>
            <person name="Xia Q."/>
            <person name="Zhang Y."/>
            <person name="Larimer F.W."/>
            <person name="Olson M.V."/>
            <person name="Leigh J.A."/>
        </authorList>
    </citation>
    <scope>NUCLEOTIDE SEQUENCE [LARGE SCALE GENOMIC DNA]</scope>
    <source>
        <strain>DSM 14266 / JCM 13030 / NBRC 101832 / S2 / LL</strain>
    </source>
</reference>
<proteinExistence type="inferred from homology"/>
<dbReference type="EC" id="2.4.2.57" evidence="1"/>
<dbReference type="EMBL" id="BX950229">
    <property type="protein sequence ID" value="CAF29883.1"/>
    <property type="molecule type" value="Genomic_DNA"/>
</dbReference>
<dbReference type="RefSeq" id="WP_011170271.1">
    <property type="nucleotide sequence ID" value="NC_005791.1"/>
</dbReference>
<dbReference type="SMR" id="Q6M0E4"/>
<dbReference type="STRING" id="267377.MMP0327"/>
<dbReference type="EnsemblBacteria" id="CAF29883">
    <property type="protein sequence ID" value="CAF29883"/>
    <property type="gene ID" value="MMP0327"/>
</dbReference>
<dbReference type="GeneID" id="2761854"/>
<dbReference type="KEGG" id="mmp:MMP0327"/>
<dbReference type="PATRIC" id="fig|267377.15.peg.330"/>
<dbReference type="eggNOG" id="arCOG02013">
    <property type="taxonomic scope" value="Archaea"/>
</dbReference>
<dbReference type="HOGENOM" id="CLU_025040_6_0_2"/>
<dbReference type="OrthoDB" id="9827at2157"/>
<dbReference type="Proteomes" id="UP000000590">
    <property type="component" value="Chromosome"/>
</dbReference>
<dbReference type="GO" id="GO:0005829">
    <property type="term" value="C:cytosol"/>
    <property type="evidence" value="ECO:0007669"/>
    <property type="project" value="TreeGrafter"/>
</dbReference>
<dbReference type="GO" id="GO:0004645">
    <property type="term" value="F:1,4-alpha-oligoglucan phosphorylase activity"/>
    <property type="evidence" value="ECO:0007669"/>
    <property type="project" value="InterPro"/>
</dbReference>
<dbReference type="GO" id="GO:0016208">
    <property type="term" value="F:AMP binding"/>
    <property type="evidence" value="ECO:0007669"/>
    <property type="project" value="UniProtKB-UniRule"/>
</dbReference>
<dbReference type="GO" id="GO:0016763">
    <property type="term" value="F:pentosyltransferase activity"/>
    <property type="evidence" value="ECO:0007669"/>
    <property type="project" value="UniProtKB-UniRule"/>
</dbReference>
<dbReference type="GO" id="GO:0006196">
    <property type="term" value="P:AMP catabolic process"/>
    <property type="evidence" value="ECO:0007669"/>
    <property type="project" value="UniProtKB-UniRule"/>
</dbReference>
<dbReference type="GO" id="GO:0046125">
    <property type="term" value="P:pyrimidine deoxyribonucleoside metabolic process"/>
    <property type="evidence" value="ECO:0007669"/>
    <property type="project" value="InterPro"/>
</dbReference>
<dbReference type="GO" id="GO:0006206">
    <property type="term" value="P:pyrimidine nucleobase metabolic process"/>
    <property type="evidence" value="ECO:0007669"/>
    <property type="project" value="InterPro"/>
</dbReference>
<dbReference type="Gene3D" id="1.20.970.50">
    <property type="match status" value="1"/>
</dbReference>
<dbReference type="Gene3D" id="2.40.40.20">
    <property type="match status" value="1"/>
</dbReference>
<dbReference type="Gene3D" id="3.40.1030.10">
    <property type="entry name" value="Nucleoside phosphorylase/phosphoribosyltransferase catalytic domain"/>
    <property type="match status" value="1"/>
</dbReference>
<dbReference type="Gene3D" id="3.90.1170.30">
    <property type="entry name" value="Pyrimidine nucleoside phosphorylase-like, C-terminal domain"/>
    <property type="match status" value="1"/>
</dbReference>
<dbReference type="HAMAP" id="MF_02132">
    <property type="entry name" value="AMP_phosphorylase"/>
    <property type="match status" value="1"/>
</dbReference>
<dbReference type="InterPro" id="IPR017713">
    <property type="entry name" value="AMP_phosphorylase"/>
</dbReference>
<dbReference type="InterPro" id="IPR000312">
    <property type="entry name" value="Glycosyl_Trfase_fam3"/>
</dbReference>
<dbReference type="InterPro" id="IPR017459">
    <property type="entry name" value="Glycosyl_Trfase_fam3_N_dom"/>
</dbReference>
<dbReference type="InterPro" id="IPR036320">
    <property type="entry name" value="Glycosyl_Trfase_fam3_N_dom_sf"/>
</dbReference>
<dbReference type="InterPro" id="IPR035902">
    <property type="entry name" value="Nuc_phospho_transferase"/>
</dbReference>
<dbReference type="InterPro" id="IPR036566">
    <property type="entry name" value="PYNP-like_C_sf"/>
</dbReference>
<dbReference type="InterPro" id="IPR013102">
    <property type="entry name" value="PYNP_C"/>
</dbReference>
<dbReference type="InterPro" id="IPR017872">
    <property type="entry name" value="Pyrmidine_PPase_CS"/>
</dbReference>
<dbReference type="InterPro" id="IPR013466">
    <property type="entry name" value="Thymidine/AMP_Pase"/>
</dbReference>
<dbReference type="InterPro" id="IPR000053">
    <property type="entry name" value="Thymidine/pyrmidine_PPase"/>
</dbReference>
<dbReference type="NCBIfam" id="TIGR03327">
    <property type="entry name" value="AMP_phos"/>
    <property type="match status" value="1"/>
</dbReference>
<dbReference type="NCBIfam" id="TIGR02645">
    <property type="entry name" value="ARCH_P_rylase"/>
    <property type="match status" value="1"/>
</dbReference>
<dbReference type="NCBIfam" id="NF003338">
    <property type="entry name" value="PRK04350.1"/>
    <property type="match status" value="1"/>
</dbReference>
<dbReference type="PANTHER" id="PTHR10515">
    <property type="entry name" value="THYMIDINE PHOSPHORYLASE"/>
    <property type="match status" value="1"/>
</dbReference>
<dbReference type="PANTHER" id="PTHR10515:SF0">
    <property type="entry name" value="THYMIDINE PHOSPHORYLASE"/>
    <property type="match status" value="1"/>
</dbReference>
<dbReference type="Pfam" id="PF02885">
    <property type="entry name" value="Glycos_trans_3N"/>
    <property type="match status" value="1"/>
</dbReference>
<dbReference type="Pfam" id="PF00591">
    <property type="entry name" value="Glycos_transf_3"/>
    <property type="match status" value="1"/>
</dbReference>
<dbReference type="Pfam" id="PF07831">
    <property type="entry name" value="PYNP_C"/>
    <property type="match status" value="1"/>
</dbReference>
<dbReference type="PIRSF" id="PIRSF000478">
    <property type="entry name" value="TP_PyNP"/>
    <property type="match status" value="1"/>
</dbReference>
<dbReference type="SMART" id="SM00941">
    <property type="entry name" value="PYNP_C"/>
    <property type="match status" value="1"/>
</dbReference>
<dbReference type="SUPFAM" id="SSF52418">
    <property type="entry name" value="Nucleoside phosphorylase/phosphoribosyltransferase catalytic domain"/>
    <property type="match status" value="1"/>
</dbReference>
<dbReference type="SUPFAM" id="SSF47648">
    <property type="entry name" value="Nucleoside phosphorylase/phosphoribosyltransferase N-terminal domain"/>
    <property type="match status" value="1"/>
</dbReference>
<dbReference type="SUPFAM" id="SSF54680">
    <property type="entry name" value="Pyrimidine nucleoside phosphorylase C-terminal domain"/>
    <property type="match status" value="1"/>
</dbReference>
<dbReference type="PROSITE" id="PS00647">
    <property type="entry name" value="THYMID_PHOSPHORYLASE"/>
    <property type="match status" value="1"/>
</dbReference>
<organism>
    <name type="scientific">Methanococcus maripaludis (strain DSM 14266 / JCM 13030 / NBRC 101832 / S2 / LL)</name>
    <dbReference type="NCBI Taxonomy" id="267377"/>
    <lineage>
        <taxon>Archaea</taxon>
        <taxon>Methanobacteriati</taxon>
        <taxon>Methanobacteriota</taxon>
        <taxon>Methanomada group</taxon>
        <taxon>Methanococci</taxon>
        <taxon>Methanococcales</taxon>
        <taxon>Methanococcaceae</taxon>
        <taxon>Methanococcus</taxon>
    </lineage>
</organism>
<comment type="function">
    <text evidence="1">Catalyzes the conversion of AMP and phosphate to adenine and ribose 1,5-bisphosphate (R15P). Exhibits phosphorylase activity toward CMP and UMP in addition to AMP. Functions in an archaeal AMP degradation pathway, together with R15P isomerase and RubisCO.</text>
</comment>
<comment type="catalytic activity">
    <reaction evidence="1">
        <text>AMP + phosphate = alpha-D-ribose 1,5-bisphosphate + adenine</text>
        <dbReference type="Rhea" id="RHEA:36975"/>
        <dbReference type="ChEBI" id="CHEBI:16708"/>
        <dbReference type="ChEBI" id="CHEBI:43474"/>
        <dbReference type="ChEBI" id="CHEBI:68688"/>
        <dbReference type="ChEBI" id="CHEBI:456215"/>
        <dbReference type="EC" id="2.4.2.57"/>
    </reaction>
</comment>
<comment type="catalytic activity">
    <reaction evidence="1">
        <text>CMP + phosphate = cytosine + alpha-D-ribose 1,5-bisphosphate</text>
        <dbReference type="Rhea" id="RHEA:36987"/>
        <dbReference type="ChEBI" id="CHEBI:16040"/>
        <dbReference type="ChEBI" id="CHEBI:43474"/>
        <dbReference type="ChEBI" id="CHEBI:60377"/>
        <dbReference type="ChEBI" id="CHEBI:68688"/>
        <dbReference type="EC" id="2.4.2.57"/>
    </reaction>
</comment>
<comment type="catalytic activity">
    <reaction evidence="1">
        <text>UMP + phosphate = alpha-D-ribose 1,5-bisphosphate + uracil</text>
        <dbReference type="Rhea" id="RHEA:36991"/>
        <dbReference type="ChEBI" id="CHEBI:17568"/>
        <dbReference type="ChEBI" id="CHEBI:43474"/>
        <dbReference type="ChEBI" id="CHEBI:57865"/>
        <dbReference type="ChEBI" id="CHEBI:68688"/>
        <dbReference type="EC" id="2.4.2.57"/>
    </reaction>
</comment>
<comment type="similarity">
    <text evidence="1">Belongs to the thymidine/pyrimidine-nucleoside phosphorylase family. Type 2 subfamily.</text>
</comment>
<keyword id="KW-0328">Glycosyltransferase</keyword>
<keyword id="KW-1185">Reference proteome</keyword>
<keyword id="KW-0808">Transferase</keyword>
<evidence type="ECO:0000255" key="1">
    <source>
        <dbReference type="HAMAP-Rule" id="MF_02132"/>
    </source>
</evidence>